<reference key="1">
    <citation type="submission" date="2007-09" db="EMBL/GenBank/DDBJ databases">
        <title>Complete genome sequencing of Rickettsia bellii.</title>
        <authorList>
            <person name="Madan A."/>
            <person name="Lee H."/>
            <person name="Madan A."/>
            <person name="Yoon J.-G."/>
            <person name="Ryu G.-Y."/>
            <person name="Dasch G."/>
            <person name="Ereemeva M."/>
        </authorList>
    </citation>
    <scope>NUCLEOTIDE SEQUENCE [LARGE SCALE GENOMIC DNA]</scope>
    <source>
        <strain>OSU 85-389</strain>
    </source>
</reference>
<dbReference type="EC" id="6.1.1.17" evidence="1"/>
<dbReference type="EMBL" id="CP000849">
    <property type="protein sequence ID" value="ABV79269.1"/>
    <property type="molecule type" value="Genomic_DNA"/>
</dbReference>
<dbReference type="SMR" id="A8GWP2"/>
<dbReference type="KEGG" id="rbo:A1I_04650"/>
<dbReference type="HOGENOM" id="CLU_015768_6_1_5"/>
<dbReference type="GO" id="GO:0005737">
    <property type="term" value="C:cytoplasm"/>
    <property type="evidence" value="ECO:0007669"/>
    <property type="project" value="UniProtKB-SubCell"/>
</dbReference>
<dbReference type="GO" id="GO:0005524">
    <property type="term" value="F:ATP binding"/>
    <property type="evidence" value="ECO:0007669"/>
    <property type="project" value="UniProtKB-UniRule"/>
</dbReference>
<dbReference type="GO" id="GO:0004818">
    <property type="term" value="F:glutamate-tRNA ligase activity"/>
    <property type="evidence" value="ECO:0007669"/>
    <property type="project" value="UniProtKB-UniRule"/>
</dbReference>
<dbReference type="GO" id="GO:0000049">
    <property type="term" value="F:tRNA binding"/>
    <property type="evidence" value="ECO:0007669"/>
    <property type="project" value="InterPro"/>
</dbReference>
<dbReference type="GO" id="GO:0006424">
    <property type="term" value="P:glutamyl-tRNA aminoacylation"/>
    <property type="evidence" value="ECO:0007669"/>
    <property type="project" value="UniProtKB-UniRule"/>
</dbReference>
<dbReference type="Gene3D" id="1.10.10.350">
    <property type="match status" value="1"/>
</dbReference>
<dbReference type="Gene3D" id="3.40.50.620">
    <property type="entry name" value="HUPs"/>
    <property type="match status" value="1"/>
</dbReference>
<dbReference type="HAMAP" id="MF_00022">
    <property type="entry name" value="Glu_tRNA_synth_type1"/>
    <property type="match status" value="1"/>
</dbReference>
<dbReference type="InterPro" id="IPR045462">
    <property type="entry name" value="aa-tRNA-synth_I_cd-bd"/>
</dbReference>
<dbReference type="InterPro" id="IPR020751">
    <property type="entry name" value="aa-tRNA-synth_I_codon-bd_sub2"/>
</dbReference>
<dbReference type="InterPro" id="IPR001412">
    <property type="entry name" value="aa-tRNA-synth_I_CS"/>
</dbReference>
<dbReference type="InterPro" id="IPR008925">
    <property type="entry name" value="aa_tRNA-synth_I_cd-bd_sf"/>
</dbReference>
<dbReference type="InterPro" id="IPR004527">
    <property type="entry name" value="Glu-tRNA-ligase_bac/mito"/>
</dbReference>
<dbReference type="InterPro" id="IPR000924">
    <property type="entry name" value="Glu/Gln-tRNA-synth"/>
</dbReference>
<dbReference type="InterPro" id="IPR020058">
    <property type="entry name" value="Glu/Gln-tRNA-synth_Ib_cat-dom"/>
</dbReference>
<dbReference type="InterPro" id="IPR049940">
    <property type="entry name" value="GluQ/Sye"/>
</dbReference>
<dbReference type="InterPro" id="IPR014729">
    <property type="entry name" value="Rossmann-like_a/b/a_fold"/>
</dbReference>
<dbReference type="NCBIfam" id="TIGR00464">
    <property type="entry name" value="gltX_bact"/>
    <property type="match status" value="1"/>
</dbReference>
<dbReference type="PANTHER" id="PTHR43311">
    <property type="entry name" value="GLUTAMATE--TRNA LIGASE"/>
    <property type="match status" value="1"/>
</dbReference>
<dbReference type="PANTHER" id="PTHR43311:SF2">
    <property type="entry name" value="GLUTAMATE--TRNA LIGASE, MITOCHONDRIAL-RELATED"/>
    <property type="match status" value="1"/>
</dbReference>
<dbReference type="Pfam" id="PF19269">
    <property type="entry name" value="Anticodon_2"/>
    <property type="match status" value="1"/>
</dbReference>
<dbReference type="Pfam" id="PF00749">
    <property type="entry name" value="tRNA-synt_1c"/>
    <property type="match status" value="1"/>
</dbReference>
<dbReference type="PRINTS" id="PR00987">
    <property type="entry name" value="TRNASYNTHGLU"/>
</dbReference>
<dbReference type="SUPFAM" id="SSF48163">
    <property type="entry name" value="An anticodon-binding domain of class I aminoacyl-tRNA synthetases"/>
    <property type="match status" value="1"/>
</dbReference>
<dbReference type="SUPFAM" id="SSF52374">
    <property type="entry name" value="Nucleotidylyl transferase"/>
    <property type="match status" value="1"/>
</dbReference>
<dbReference type="PROSITE" id="PS00178">
    <property type="entry name" value="AA_TRNA_LIGASE_I"/>
    <property type="match status" value="1"/>
</dbReference>
<protein>
    <recommendedName>
        <fullName evidence="1">Glutamate--tRNA ligase 1</fullName>
        <ecNumber evidence="1">6.1.1.17</ecNumber>
    </recommendedName>
    <alternativeName>
        <fullName evidence="1">Glutamyl-tRNA synthetase 1</fullName>
        <shortName evidence="1">GluRS 1</shortName>
    </alternativeName>
</protein>
<proteinExistence type="inferred from homology"/>
<evidence type="ECO:0000255" key="1">
    <source>
        <dbReference type="HAMAP-Rule" id="MF_00022"/>
    </source>
</evidence>
<name>SYE1_RICB8</name>
<gene>
    <name evidence="1" type="primary">gltX1</name>
    <name type="ordered locus">A1I_04650</name>
</gene>
<keyword id="KW-0030">Aminoacyl-tRNA synthetase</keyword>
<keyword id="KW-0067">ATP-binding</keyword>
<keyword id="KW-0963">Cytoplasm</keyword>
<keyword id="KW-0436">Ligase</keyword>
<keyword id="KW-0547">Nucleotide-binding</keyword>
<keyword id="KW-0648">Protein biosynthesis</keyword>
<feature type="chain" id="PRO_0000367754" description="Glutamate--tRNA ligase 1">
    <location>
        <begin position="1"/>
        <end position="445"/>
    </location>
</feature>
<feature type="short sequence motif" description="'HIGH' region" evidence="1">
    <location>
        <begin position="10"/>
        <end position="20"/>
    </location>
</feature>
<feature type="short sequence motif" description="'KMSKS' region" evidence="1">
    <location>
        <begin position="240"/>
        <end position="244"/>
    </location>
</feature>
<feature type="binding site" evidence="1">
    <location>
        <position position="243"/>
    </location>
    <ligand>
        <name>ATP</name>
        <dbReference type="ChEBI" id="CHEBI:30616"/>
    </ligand>
</feature>
<comment type="function">
    <text evidence="1">Catalyzes the attachment of glutamate to tRNA(Glu) in a two-step reaction: glutamate is first activated by ATP to form Glu-AMP and then transferred to the acceptor end of tRNA(Glu).</text>
</comment>
<comment type="catalytic activity">
    <reaction evidence="1">
        <text>tRNA(Glu) + L-glutamate + ATP = L-glutamyl-tRNA(Glu) + AMP + diphosphate</text>
        <dbReference type="Rhea" id="RHEA:23540"/>
        <dbReference type="Rhea" id="RHEA-COMP:9663"/>
        <dbReference type="Rhea" id="RHEA-COMP:9680"/>
        <dbReference type="ChEBI" id="CHEBI:29985"/>
        <dbReference type="ChEBI" id="CHEBI:30616"/>
        <dbReference type="ChEBI" id="CHEBI:33019"/>
        <dbReference type="ChEBI" id="CHEBI:78442"/>
        <dbReference type="ChEBI" id="CHEBI:78520"/>
        <dbReference type="ChEBI" id="CHEBI:456215"/>
        <dbReference type="EC" id="6.1.1.17"/>
    </reaction>
</comment>
<comment type="subunit">
    <text evidence="1">Monomer.</text>
</comment>
<comment type="subcellular location">
    <subcellularLocation>
        <location evidence="1">Cytoplasm</location>
    </subcellularLocation>
</comment>
<comment type="similarity">
    <text evidence="1">Belongs to the class-I aminoacyl-tRNA synthetase family. Glutamate--tRNA ligase type 1 subfamily.</text>
</comment>
<accession>A8GWP2</accession>
<sequence length="445" mass="51851">MTKVITRFAPSPTGMLHVGNIRAALLNWLYAKKHDGQFILRFDDTDLERSKQEYKDAIRADLKFLNLNWDQTFNQLSRLSRYDEIKKLLLDKKRLYACYETPEELELKRKFQLSKGLPPIYDRAALNLTEDQIQKYIEQGRKPHYRFLVNHEPITWHDMIKGEVKYEGKALSDPIVIRADGSMTYMLCSVIDDVDYEITHIIRGEDHVSNTAIQIQMFEALDKYPPTFGHLSLIINKDEKISKRVGGFEIATLREEVGLEAMAIASFFSLLGSSAQIIPHKKMDELVKHFEISSFSKSPTIYQPEDLERLNHKLLISLEFNEVKDRLKEIDAEYIDENFWLSVRPNLKKLFDAKDWWEICHKTPNIQDLNLDKEYLKQAAELLPEEEITTETWGIWTKKLAAITNRKGKELFLPLRLALTGKESGPEISKVLPLIKREEIVKRLT</sequence>
<organism>
    <name type="scientific">Rickettsia bellii (strain OSU 85-389)</name>
    <dbReference type="NCBI Taxonomy" id="391896"/>
    <lineage>
        <taxon>Bacteria</taxon>
        <taxon>Pseudomonadati</taxon>
        <taxon>Pseudomonadota</taxon>
        <taxon>Alphaproteobacteria</taxon>
        <taxon>Rickettsiales</taxon>
        <taxon>Rickettsiaceae</taxon>
        <taxon>Rickettsieae</taxon>
        <taxon>Rickettsia</taxon>
        <taxon>belli group</taxon>
    </lineage>
</organism>